<evidence type="ECO:0000255" key="1">
    <source>
        <dbReference type="HAMAP-Rule" id="MF_00336"/>
    </source>
</evidence>
<feature type="chain" id="PRO_0000187958" description="ATP-dependent dethiobiotin synthetase BioD">
    <location>
        <begin position="1"/>
        <end position="240"/>
    </location>
</feature>
<feature type="active site" evidence="1">
    <location>
        <position position="37"/>
    </location>
</feature>
<feature type="binding site" evidence="1">
    <location>
        <begin position="12"/>
        <end position="17"/>
    </location>
    <ligand>
        <name>ATP</name>
        <dbReference type="ChEBI" id="CHEBI:30616"/>
    </ligand>
</feature>
<feature type="binding site" evidence="1">
    <location>
        <position position="16"/>
    </location>
    <ligand>
        <name>Mg(2+)</name>
        <dbReference type="ChEBI" id="CHEBI:18420"/>
    </ligand>
</feature>
<feature type="binding site" evidence="1">
    <location>
        <position position="41"/>
    </location>
    <ligand>
        <name>substrate</name>
    </ligand>
</feature>
<feature type="binding site" evidence="1">
    <location>
        <position position="54"/>
    </location>
    <ligand>
        <name>ATP</name>
        <dbReference type="ChEBI" id="CHEBI:30616"/>
    </ligand>
</feature>
<feature type="binding site" evidence="1">
    <location>
        <position position="54"/>
    </location>
    <ligand>
        <name>Mg(2+)</name>
        <dbReference type="ChEBI" id="CHEBI:18420"/>
    </ligand>
</feature>
<feature type="binding site" evidence="1">
    <location>
        <begin position="115"/>
        <end position="118"/>
    </location>
    <ligand>
        <name>ATP</name>
        <dbReference type="ChEBI" id="CHEBI:30616"/>
    </ligand>
</feature>
<feature type="binding site" evidence="1">
    <location>
        <position position="115"/>
    </location>
    <ligand>
        <name>Mg(2+)</name>
        <dbReference type="ChEBI" id="CHEBI:18420"/>
    </ligand>
</feature>
<feature type="binding site" evidence="1">
    <location>
        <begin position="179"/>
        <end position="180"/>
    </location>
    <ligand>
        <name>ATP</name>
        <dbReference type="ChEBI" id="CHEBI:30616"/>
    </ligand>
</feature>
<feature type="binding site" evidence="1">
    <location>
        <begin position="207"/>
        <end position="209"/>
    </location>
    <ligand>
        <name>ATP</name>
        <dbReference type="ChEBI" id="CHEBI:30616"/>
    </ligand>
</feature>
<sequence length="240" mass="26677">MRGIYLVGTDTEIGKTVISAALVYILCKAGYKTAYFKAALSDAEELNGKLIPGDTEFVCSLSGIQEDYEKLTPYIYKTAVSPYLASKIENKPIDIQVIKDKLTKLENEYGYVLCEGSGGVICPITDVDNKIYTLGNLIKDMKMDVILVCRAGLGTINHTVLTVSYLKNNGIEVKGIIVNQYEENRLCKDNINMIKKMTGIPILGVMPYINENKKNFIEELKYNACNIFKADEIAGLMKEV</sequence>
<dbReference type="EC" id="6.3.3.3" evidence="1"/>
<dbReference type="EMBL" id="AE001437">
    <property type="protein sequence ID" value="AAK79329.1"/>
    <property type="molecule type" value="Genomic_DNA"/>
</dbReference>
<dbReference type="PIR" id="F97067">
    <property type="entry name" value="F97067"/>
</dbReference>
<dbReference type="RefSeq" id="NP_347989.1">
    <property type="nucleotide sequence ID" value="NC_003030.1"/>
</dbReference>
<dbReference type="RefSeq" id="WP_010964670.1">
    <property type="nucleotide sequence ID" value="NC_003030.1"/>
</dbReference>
<dbReference type="SMR" id="Q97JC5"/>
<dbReference type="STRING" id="272562.CA_C1361"/>
<dbReference type="GeneID" id="44997866"/>
<dbReference type="KEGG" id="cac:CA_C1361"/>
<dbReference type="PATRIC" id="fig|272562.8.peg.1566"/>
<dbReference type="eggNOG" id="COG0132">
    <property type="taxonomic scope" value="Bacteria"/>
</dbReference>
<dbReference type="HOGENOM" id="CLU_072551_3_0_9"/>
<dbReference type="OrthoDB" id="9802097at2"/>
<dbReference type="UniPathway" id="UPA00078">
    <property type="reaction ID" value="UER00161"/>
</dbReference>
<dbReference type="Proteomes" id="UP000000814">
    <property type="component" value="Chromosome"/>
</dbReference>
<dbReference type="GO" id="GO:0005829">
    <property type="term" value="C:cytosol"/>
    <property type="evidence" value="ECO:0007669"/>
    <property type="project" value="TreeGrafter"/>
</dbReference>
<dbReference type="GO" id="GO:0005524">
    <property type="term" value="F:ATP binding"/>
    <property type="evidence" value="ECO:0007669"/>
    <property type="project" value="UniProtKB-UniRule"/>
</dbReference>
<dbReference type="GO" id="GO:0004141">
    <property type="term" value="F:dethiobiotin synthase activity"/>
    <property type="evidence" value="ECO:0007669"/>
    <property type="project" value="UniProtKB-UniRule"/>
</dbReference>
<dbReference type="GO" id="GO:0000287">
    <property type="term" value="F:magnesium ion binding"/>
    <property type="evidence" value="ECO:0007669"/>
    <property type="project" value="UniProtKB-UniRule"/>
</dbReference>
<dbReference type="GO" id="GO:0009102">
    <property type="term" value="P:biotin biosynthetic process"/>
    <property type="evidence" value="ECO:0007669"/>
    <property type="project" value="UniProtKB-UniRule"/>
</dbReference>
<dbReference type="CDD" id="cd03109">
    <property type="entry name" value="DTBS"/>
    <property type="match status" value="1"/>
</dbReference>
<dbReference type="FunFam" id="3.40.50.300:FF:000292">
    <property type="entry name" value="ATP-dependent dethiobiotin synthetase BioD"/>
    <property type="match status" value="1"/>
</dbReference>
<dbReference type="Gene3D" id="3.40.50.300">
    <property type="entry name" value="P-loop containing nucleotide triphosphate hydrolases"/>
    <property type="match status" value="1"/>
</dbReference>
<dbReference type="HAMAP" id="MF_00336">
    <property type="entry name" value="BioD"/>
    <property type="match status" value="1"/>
</dbReference>
<dbReference type="InterPro" id="IPR004472">
    <property type="entry name" value="DTB_synth_BioD"/>
</dbReference>
<dbReference type="InterPro" id="IPR027417">
    <property type="entry name" value="P-loop_NTPase"/>
</dbReference>
<dbReference type="NCBIfam" id="TIGR00347">
    <property type="entry name" value="bioD"/>
    <property type="match status" value="1"/>
</dbReference>
<dbReference type="PANTHER" id="PTHR43210:SF2">
    <property type="entry name" value="ATP-DEPENDENT DETHIOBIOTIN SYNTHETASE BIOD 2"/>
    <property type="match status" value="1"/>
</dbReference>
<dbReference type="PANTHER" id="PTHR43210">
    <property type="entry name" value="DETHIOBIOTIN SYNTHETASE"/>
    <property type="match status" value="1"/>
</dbReference>
<dbReference type="Pfam" id="PF13500">
    <property type="entry name" value="AAA_26"/>
    <property type="match status" value="1"/>
</dbReference>
<dbReference type="PIRSF" id="PIRSF006755">
    <property type="entry name" value="DTB_synth"/>
    <property type="match status" value="1"/>
</dbReference>
<dbReference type="SUPFAM" id="SSF52540">
    <property type="entry name" value="P-loop containing nucleoside triphosphate hydrolases"/>
    <property type="match status" value="1"/>
</dbReference>
<reference key="1">
    <citation type="journal article" date="2001" name="J. Bacteriol.">
        <title>Genome sequence and comparative analysis of the solvent-producing bacterium Clostridium acetobutylicum.</title>
        <authorList>
            <person name="Noelling J."/>
            <person name="Breton G."/>
            <person name="Omelchenko M.V."/>
            <person name="Makarova K.S."/>
            <person name="Zeng Q."/>
            <person name="Gibson R."/>
            <person name="Lee H.M."/>
            <person name="Dubois J."/>
            <person name="Qiu D."/>
            <person name="Hitti J."/>
            <person name="Wolf Y.I."/>
            <person name="Tatusov R.L."/>
            <person name="Sabathe F."/>
            <person name="Doucette-Stamm L.A."/>
            <person name="Soucaille P."/>
            <person name="Daly M.J."/>
            <person name="Bennett G.N."/>
            <person name="Koonin E.V."/>
            <person name="Smith D.R."/>
        </authorList>
    </citation>
    <scope>NUCLEOTIDE SEQUENCE [LARGE SCALE GENOMIC DNA]</scope>
    <source>
        <strain>ATCC 824 / DSM 792 / JCM 1419 / IAM 19013 / LMG 5710 / NBRC 13948 / NRRL B-527 / VKM B-1787 / 2291 / W</strain>
    </source>
</reference>
<gene>
    <name evidence="1" type="primary">bioD</name>
    <name type="ordered locus">CA_C1361</name>
</gene>
<keyword id="KW-0067">ATP-binding</keyword>
<keyword id="KW-0093">Biotin biosynthesis</keyword>
<keyword id="KW-0963">Cytoplasm</keyword>
<keyword id="KW-0436">Ligase</keyword>
<keyword id="KW-0460">Magnesium</keyword>
<keyword id="KW-0479">Metal-binding</keyword>
<keyword id="KW-0547">Nucleotide-binding</keyword>
<keyword id="KW-1185">Reference proteome</keyword>
<comment type="function">
    <text evidence="1">Catalyzes a mechanistically unusual reaction, the ATP-dependent insertion of CO2 between the N7 and N8 nitrogen atoms of 7,8-diaminopelargonic acid (DAPA, also called 7,8-diammoniononanoate) to form a ureido ring.</text>
</comment>
<comment type="catalytic activity">
    <reaction evidence="1">
        <text>(7R,8S)-7,8-diammoniononanoate + CO2 + ATP = (4R,5S)-dethiobiotin + ADP + phosphate + 3 H(+)</text>
        <dbReference type="Rhea" id="RHEA:15805"/>
        <dbReference type="ChEBI" id="CHEBI:15378"/>
        <dbReference type="ChEBI" id="CHEBI:16526"/>
        <dbReference type="ChEBI" id="CHEBI:30616"/>
        <dbReference type="ChEBI" id="CHEBI:43474"/>
        <dbReference type="ChEBI" id="CHEBI:149469"/>
        <dbReference type="ChEBI" id="CHEBI:149473"/>
        <dbReference type="ChEBI" id="CHEBI:456216"/>
        <dbReference type="EC" id="6.3.3.3"/>
    </reaction>
</comment>
<comment type="cofactor">
    <cofactor evidence="1">
        <name>Mg(2+)</name>
        <dbReference type="ChEBI" id="CHEBI:18420"/>
    </cofactor>
</comment>
<comment type="pathway">
    <text evidence="1">Cofactor biosynthesis; biotin biosynthesis; biotin from 7,8-diaminononanoate: step 1/2.</text>
</comment>
<comment type="subunit">
    <text evidence="1">Homodimer.</text>
</comment>
<comment type="subcellular location">
    <subcellularLocation>
        <location evidence="1">Cytoplasm</location>
    </subcellularLocation>
</comment>
<comment type="similarity">
    <text evidence="1">Belongs to the dethiobiotin synthetase family.</text>
</comment>
<protein>
    <recommendedName>
        <fullName evidence="1">ATP-dependent dethiobiotin synthetase BioD</fullName>
        <ecNumber evidence="1">6.3.3.3</ecNumber>
    </recommendedName>
    <alternativeName>
        <fullName evidence="1">DTB synthetase</fullName>
        <shortName evidence="1">DTBS</shortName>
    </alternativeName>
    <alternativeName>
        <fullName evidence="1">Dethiobiotin synthase</fullName>
    </alternativeName>
</protein>
<organism>
    <name type="scientific">Clostridium acetobutylicum (strain ATCC 824 / DSM 792 / JCM 1419 / IAM 19013 / LMG 5710 / NBRC 13948 / NRRL B-527 / VKM B-1787 / 2291 / W)</name>
    <dbReference type="NCBI Taxonomy" id="272562"/>
    <lineage>
        <taxon>Bacteria</taxon>
        <taxon>Bacillati</taxon>
        <taxon>Bacillota</taxon>
        <taxon>Clostridia</taxon>
        <taxon>Eubacteriales</taxon>
        <taxon>Clostridiaceae</taxon>
        <taxon>Clostridium</taxon>
    </lineage>
</organism>
<name>BIOD_CLOAB</name>
<accession>Q97JC5</accession>
<proteinExistence type="inferred from homology"/>